<evidence type="ECO:0000255" key="1">
    <source>
        <dbReference type="HAMAP-Rule" id="MF_00740"/>
    </source>
</evidence>
<gene>
    <name evidence="1" type="primary">deoB</name>
    <name type="ordered locus">lpg0639</name>
</gene>
<organism>
    <name type="scientific">Legionella pneumophila subsp. pneumophila (strain Philadelphia 1 / ATCC 33152 / DSM 7513)</name>
    <dbReference type="NCBI Taxonomy" id="272624"/>
    <lineage>
        <taxon>Bacteria</taxon>
        <taxon>Pseudomonadati</taxon>
        <taxon>Pseudomonadota</taxon>
        <taxon>Gammaproteobacteria</taxon>
        <taxon>Legionellales</taxon>
        <taxon>Legionellaceae</taxon>
        <taxon>Legionella</taxon>
    </lineage>
</organism>
<protein>
    <recommendedName>
        <fullName evidence="1">Phosphopentomutase</fullName>
        <ecNumber evidence="1">5.4.2.7</ecNumber>
    </recommendedName>
    <alternativeName>
        <fullName evidence="1">Phosphodeoxyribomutase</fullName>
    </alternativeName>
</protein>
<dbReference type="EC" id="5.4.2.7" evidence="1"/>
<dbReference type="EMBL" id="AE017354">
    <property type="protein sequence ID" value="AAU26728.1"/>
    <property type="molecule type" value="Genomic_DNA"/>
</dbReference>
<dbReference type="RefSeq" id="WP_010946376.1">
    <property type="nucleotide sequence ID" value="NC_002942.5"/>
</dbReference>
<dbReference type="RefSeq" id="YP_094675.1">
    <property type="nucleotide sequence ID" value="NC_002942.5"/>
</dbReference>
<dbReference type="SMR" id="Q5ZXU2"/>
<dbReference type="STRING" id="272624.lpg0639"/>
<dbReference type="PaxDb" id="272624-lpg0639"/>
<dbReference type="KEGG" id="lpn:lpg0639"/>
<dbReference type="PATRIC" id="fig|272624.6.peg.657"/>
<dbReference type="eggNOG" id="COG1015">
    <property type="taxonomic scope" value="Bacteria"/>
</dbReference>
<dbReference type="HOGENOM" id="CLU_053861_0_0_6"/>
<dbReference type="OrthoDB" id="9769930at2"/>
<dbReference type="UniPathway" id="UPA00002">
    <property type="reaction ID" value="UER00467"/>
</dbReference>
<dbReference type="Proteomes" id="UP000000609">
    <property type="component" value="Chromosome"/>
</dbReference>
<dbReference type="GO" id="GO:0005829">
    <property type="term" value="C:cytosol"/>
    <property type="evidence" value="ECO:0007669"/>
    <property type="project" value="TreeGrafter"/>
</dbReference>
<dbReference type="GO" id="GO:0000287">
    <property type="term" value="F:magnesium ion binding"/>
    <property type="evidence" value="ECO:0007669"/>
    <property type="project" value="InterPro"/>
</dbReference>
<dbReference type="GO" id="GO:0030145">
    <property type="term" value="F:manganese ion binding"/>
    <property type="evidence" value="ECO:0007669"/>
    <property type="project" value="UniProtKB-UniRule"/>
</dbReference>
<dbReference type="GO" id="GO:0008973">
    <property type="term" value="F:phosphopentomutase activity"/>
    <property type="evidence" value="ECO:0007669"/>
    <property type="project" value="UniProtKB-UniRule"/>
</dbReference>
<dbReference type="GO" id="GO:0006018">
    <property type="term" value="P:2-deoxyribose 1-phosphate catabolic process"/>
    <property type="evidence" value="ECO:0007669"/>
    <property type="project" value="UniProtKB-UniRule"/>
</dbReference>
<dbReference type="GO" id="GO:0006015">
    <property type="term" value="P:5-phosphoribose 1-diphosphate biosynthetic process"/>
    <property type="evidence" value="ECO:0007669"/>
    <property type="project" value="UniProtKB-UniPathway"/>
</dbReference>
<dbReference type="GO" id="GO:0043094">
    <property type="term" value="P:metabolic compound salvage"/>
    <property type="evidence" value="ECO:0007669"/>
    <property type="project" value="InterPro"/>
</dbReference>
<dbReference type="GO" id="GO:0009117">
    <property type="term" value="P:nucleotide metabolic process"/>
    <property type="evidence" value="ECO:0007669"/>
    <property type="project" value="InterPro"/>
</dbReference>
<dbReference type="CDD" id="cd16009">
    <property type="entry name" value="PPM"/>
    <property type="match status" value="1"/>
</dbReference>
<dbReference type="FunFam" id="3.30.70.1250:FF:000001">
    <property type="entry name" value="Phosphopentomutase"/>
    <property type="match status" value="1"/>
</dbReference>
<dbReference type="Gene3D" id="3.40.720.10">
    <property type="entry name" value="Alkaline Phosphatase, subunit A"/>
    <property type="match status" value="1"/>
</dbReference>
<dbReference type="Gene3D" id="3.30.70.1250">
    <property type="entry name" value="Phosphopentomutase"/>
    <property type="match status" value="1"/>
</dbReference>
<dbReference type="HAMAP" id="MF_00740">
    <property type="entry name" value="Phosphopentomut"/>
    <property type="match status" value="1"/>
</dbReference>
<dbReference type="InterPro" id="IPR017850">
    <property type="entry name" value="Alkaline_phosphatase_core_sf"/>
</dbReference>
<dbReference type="InterPro" id="IPR010045">
    <property type="entry name" value="DeoB"/>
</dbReference>
<dbReference type="InterPro" id="IPR006124">
    <property type="entry name" value="Metalloenzyme"/>
</dbReference>
<dbReference type="InterPro" id="IPR024052">
    <property type="entry name" value="Phosphopentomutase_DeoB_cap_sf"/>
</dbReference>
<dbReference type="NCBIfam" id="TIGR01696">
    <property type="entry name" value="deoB"/>
    <property type="match status" value="1"/>
</dbReference>
<dbReference type="NCBIfam" id="NF003766">
    <property type="entry name" value="PRK05362.1"/>
    <property type="match status" value="1"/>
</dbReference>
<dbReference type="PANTHER" id="PTHR21110">
    <property type="entry name" value="PHOSPHOPENTOMUTASE"/>
    <property type="match status" value="1"/>
</dbReference>
<dbReference type="PANTHER" id="PTHR21110:SF0">
    <property type="entry name" value="PHOSPHOPENTOMUTASE"/>
    <property type="match status" value="1"/>
</dbReference>
<dbReference type="Pfam" id="PF01676">
    <property type="entry name" value="Metalloenzyme"/>
    <property type="match status" value="1"/>
</dbReference>
<dbReference type="PIRSF" id="PIRSF001491">
    <property type="entry name" value="Ppentomutase"/>
    <property type="match status" value="1"/>
</dbReference>
<dbReference type="SUPFAM" id="SSF53649">
    <property type="entry name" value="Alkaline phosphatase-like"/>
    <property type="match status" value="1"/>
</dbReference>
<dbReference type="SUPFAM" id="SSF143856">
    <property type="entry name" value="DeoB insert domain-like"/>
    <property type="match status" value="1"/>
</dbReference>
<proteinExistence type="inferred from homology"/>
<feature type="chain" id="PRO_0000258293" description="Phosphopentomutase">
    <location>
        <begin position="1"/>
        <end position="407"/>
    </location>
</feature>
<feature type="binding site" evidence="1">
    <location>
        <position position="11"/>
    </location>
    <ligand>
        <name>Mn(2+)</name>
        <dbReference type="ChEBI" id="CHEBI:29035"/>
        <label>1</label>
    </ligand>
</feature>
<feature type="binding site" evidence="1">
    <location>
        <position position="305"/>
    </location>
    <ligand>
        <name>Mn(2+)</name>
        <dbReference type="ChEBI" id="CHEBI:29035"/>
        <label>2</label>
    </ligand>
</feature>
<feature type="binding site" evidence="1">
    <location>
        <position position="310"/>
    </location>
    <ligand>
        <name>Mn(2+)</name>
        <dbReference type="ChEBI" id="CHEBI:29035"/>
        <label>2</label>
    </ligand>
</feature>
<feature type="binding site" evidence="1">
    <location>
        <position position="346"/>
    </location>
    <ligand>
        <name>Mn(2+)</name>
        <dbReference type="ChEBI" id="CHEBI:29035"/>
        <label>1</label>
    </ligand>
</feature>
<feature type="binding site" evidence="1">
    <location>
        <position position="347"/>
    </location>
    <ligand>
        <name>Mn(2+)</name>
        <dbReference type="ChEBI" id="CHEBI:29035"/>
        <label>1</label>
    </ligand>
</feature>
<feature type="binding site" evidence="1">
    <location>
        <position position="358"/>
    </location>
    <ligand>
        <name>Mn(2+)</name>
        <dbReference type="ChEBI" id="CHEBI:29035"/>
        <label>2</label>
    </ligand>
</feature>
<reference key="1">
    <citation type="journal article" date="2004" name="Science">
        <title>The genomic sequence of the accidental pathogen Legionella pneumophila.</title>
        <authorList>
            <person name="Chien M."/>
            <person name="Morozova I."/>
            <person name="Shi S."/>
            <person name="Sheng H."/>
            <person name="Chen J."/>
            <person name="Gomez S.M."/>
            <person name="Asamani G."/>
            <person name="Hill K."/>
            <person name="Nuara J."/>
            <person name="Feder M."/>
            <person name="Rineer J."/>
            <person name="Greenberg J.J."/>
            <person name="Steshenko V."/>
            <person name="Park S.H."/>
            <person name="Zhao B."/>
            <person name="Teplitskaya E."/>
            <person name="Edwards J.R."/>
            <person name="Pampou S."/>
            <person name="Georghiou A."/>
            <person name="Chou I.-C."/>
            <person name="Iannuccilli W."/>
            <person name="Ulz M.E."/>
            <person name="Kim D.H."/>
            <person name="Geringer-Sameth A."/>
            <person name="Goldsberry C."/>
            <person name="Morozov P."/>
            <person name="Fischer S.G."/>
            <person name="Segal G."/>
            <person name="Qu X."/>
            <person name="Rzhetsky A."/>
            <person name="Zhang P."/>
            <person name="Cayanis E."/>
            <person name="De Jong P.J."/>
            <person name="Ju J."/>
            <person name="Kalachikov S."/>
            <person name="Shuman H.A."/>
            <person name="Russo J.J."/>
        </authorList>
    </citation>
    <scope>NUCLEOTIDE SEQUENCE [LARGE SCALE GENOMIC DNA]</scope>
    <source>
        <strain>Philadelphia 1 / ATCC 33152 / DSM 7513</strain>
    </source>
</reference>
<name>DEOB_LEGPH</name>
<sequence>MTGRVCVLVMDSFGIGASLDAARYGDAGANTLVHIYEACKRGECDIEGVRKGPLMLPNLAGKGLYHAAMASSGLSFIDLATLAIPSGYYGYAVEQSLGKDTPSGHWEMAGVPVTFEWGYFPDKPYCFPEELISEFIKQCNLPGVLGEKHASGTIIIDELGEKHIRTGKPIVYTSADSVFQIAAHEEAFGLQRLYDICKIARNLVDKYQIGRVIARPFTGKPGSFKRTGNRKDYATPPPEKTLLDFLKEDGREVIAIGKIADIYAHQGVTQEIKADGNMALFDATLSAMKTAPQGSLVFTNFVDFDSSYGHRRDIAGYAHALEQFDARLPELDALLQPDDMVFIAADHGCDPTFPGSDHTREHIPVLVFGPQVNSKFIGRRDCFADIGQSIAEHLQLSSPLAHGVSFL</sequence>
<accession>Q5ZXU2</accession>
<comment type="function">
    <text evidence="1">Isomerase that catalyzes the conversion of deoxy-ribose 1-phosphate (dRib-1-P) and ribose 1-phosphate (Rib-1-P) to deoxy-ribose 5-phosphate (dRib-5-P) and ribose 5-phosphate (Rib-5-P), respectively.</text>
</comment>
<comment type="catalytic activity">
    <reaction evidence="1">
        <text>2-deoxy-alpha-D-ribose 1-phosphate = 2-deoxy-D-ribose 5-phosphate</text>
        <dbReference type="Rhea" id="RHEA:27658"/>
        <dbReference type="ChEBI" id="CHEBI:57259"/>
        <dbReference type="ChEBI" id="CHEBI:62877"/>
        <dbReference type="EC" id="5.4.2.7"/>
    </reaction>
</comment>
<comment type="catalytic activity">
    <reaction evidence="1">
        <text>alpha-D-ribose 1-phosphate = D-ribose 5-phosphate</text>
        <dbReference type="Rhea" id="RHEA:18793"/>
        <dbReference type="ChEBI" id="CHEBI:57720"/>
        <dbReference type="ChEBI" id="CHEBI:78346"/>
        <dbReference type="EC" id="5.4.2.7"/>
    </reaction>
</comment>
<comment type="cofactor">
    <cofactor evidence="1">
        <name>Mn(2+)</name>
        <dbReference type="ChEBI" id="CHEBI:29035"/>
    </cofactor>
    <text evidence="1">Binds 2 manganese ions.</text>
</comment>
<comment type="pathway">
    <text evidence="1">Carbohydrate degradation; 2-deoxy-D-ribose 1-phosphate degradation; D-glyceraldehyde 3-phosphate and acetaldehyde from 2-deoxy-alpha-D-ribose 1-phosphate: step 1/2.</text>
</comment>
<comment type="subcellular location">
    <subcellularLocation>
        <location evidence="1">Cytoplasm</location>
    </subcellularLocation>
</comment>
<comment type="similarity">
    <text evidence="1">Belongs to the phosphopentomutase family.</text>
</comment>
<keyword id="KW-0963">Cytoplasm</keyword>
<keyword id="KW-0413">Isomerase</keyword>
<keyword id="KW-0464">Manganese</keyword>
<keyword id="KW-0479">Metal-binding</keyword>
<keyword id="KW-1185">Reference proteome</keyword>